<evidence type="ECO:0000255" key="1">
    <source>
        <dbReference type="HAMAP-Rule" id="MF_01866"/>
    </source>
</evidence>
<name>Y1564_PSEU2</name>
<feature type="chain" id="PRO_0000375341" description="YcgL domain-containing protein Psyr_1564">
    <location>
        <begin position="1"/>
        <end position="97"/>
    </location>
</feature>
<feature type="domain" description="YcgL" evidence="1">
    <location>
        <begin position="3"/>
        <end position="87"/>
    </location>
</feature>
<gene>
    <name type="ordered locus">Psyr_1564</name>
</gene>
<dbReference type="EMBL" id="CP000075">
    <property type="protein sequence ID" value="AAY36612.1"/>
    <property type="molecule type" value="Genomic_DNA"/>
</dbReference>
<dbReference type="RefSeq" id="WP_003317401.1">
    <property type="nucleotide sequence ID" value="NC_007005.1"/>
</dbReference>
<dbReference type="RefSeq" id="YP_234650.1">
    <property type="nucleotide sequence ID" value="NC_007005.1"/>
</dbReference>
<dbReference type="SMR" id="Q4ZW60"/>
<dbReference type="STRING" id="205918.Psyr_1564"/>
<dbReference type="KEGG" id="psb:Psyr_1564"/>
<dbReference type="PATRIC" id="fig|205918.7.peg.1598"/>
<dbReference type="eggNOG" id="COG3100">
    <property type="taxonomic scope" value="Bacteria"/>
</dbReference>
<dbReference type="HOGENOM" id="CLU_155118_2_0_6"/>
<dbReference type="OrthoDB" id="7062382at2"/>
<dbReference type="Proteomes" id="UP000000426">
    <property type="component" value="Chromosome"/>
</dbReference>
<dbReference type="Gene3D" id="3.10.510.20">
    <property type="entry name" value="YcgL domain"/>
    <property type="match status" value="1"/>
</dbReference>
<dbReference type="HAMAP" id="MF_01866">
    <property type="entry name" value="UPF0745"/>
    <property type="match status" value="1"/>
</dbReference>
<dbReference type="InterPro" id="IPR038068">
    <property type="entry name" value="YcgL-like_sf"/>
</dbReference>
<dbReference type="InterPro" id="IPR027354">
    <property type="entry name" value="YcgL_dom"/>
</dbReference>
<dbReference type="PANTHER" id="PTHR38109">
    <property type="entry name" value="PROTEIN YCGL"/>
    <property type="match status" value="1"/>
</dbReference>
<dbReference type="PANTHER" id="PTHR38109:SF1">
    <property type="entry name" value="PROTEIN YCGL"/>
    <property type="match status" value="1"/>
</dbReference>
<dbReference type="Pfam" id="PF05166">
    <property type="entry name" value="YcgL"/>
    <property type="match status" value="1"/>
</dbReference>
<dbReference type="SUPFAM" id="SSF160191">
    <property type="entry name" value="YcgL-like"/>
    <property type="match status" value="1"/>
</dbReference>
<dbReference type="PROSITE" id="PS51648">
    <property type="entry name" value="YCGL"/>
    <property type="match status" value="1"/>
</dbReference>
<organism>
    <name type="scientific">Pseudomonas syringae pv. syringae (strain B728a)</name>
    <dbReference type="NCBI Taxonomy" id="205918"/>
    <lineage>
        <taxon>Bacteria</taxon>
        <taxon>Pseudomonadati</taxon>
        <taxon>Pseudomonadota</taxon>
        <taxon>Gammaproteobacteria</taxon>
        <taxon>Pseudomonadales</taxon>
        <taxon>Pseudomonadaceae</taxon>
        <taxon>Pseudomonas</taxon>
        <taxon>Pseudomonas syringae</taxon>
    </lineage>
</organism>
<protein>
    <recommendedName>
        <fullName evidence="1">YcgL domain-containing protein Psyr_1564</fullName>
    </recommendedName>
</protein>
<proteinExistence type="inferred from homology"/>
<sequence length="97" mass="11381">MKRICSIYRSPKRNEMYLYVLKSDVLKRVPPELMVAFGKPVHAFDLVLSPERALSREDINVVLENLDSQGYHLQMPPAEDDYIEHLPEELLRRNDPM</sequence>
<reference key="1">
    <citation type="journal article" date="2005" name="Proc. Natl. Acad. Sci. U.S.A.">
        <title>Comparison of the complete genome sequences of Pseudomonas syringae pv. syringae B728a and pv. tomato DC3000.</title>
        <authorList>
            <person name="Feil H."/>
            <person name="Feil W.S."/>
            <person name="Chain P."/>
            <person name="Larimer F."/>
            <person name="Dibartolo G."/>
            <person name="Copeland A."/>
            <person name="Lykidis A."/>
            <person name="Trong S."/>
            <person name="Nolan M."/>
            <person name="Goltsman E."/>
            <person name="Thiel J."/>
            <person name="Malfatti S."/>
            <person name="Loper J.E."/>
            <person name="Lapidus A."/>
            <person name="Detter J.C."/>
            <person name="Land M."/>
            <person name="Richardson P.M."/>
            <person name="Kyrpides N.C."/>
            <person name="Ivanova N."/>
            <person name="Lindow S.E."/>
        </authorList>
    </citation>
    <scope>NUCLEOTIDE SEQUENCE [LARGE SCALE GENOMIC DNA]</scope>
    <source>
        <strain>B728a</strain>
    </source>
</reference>
<accession>Q4ZW60</accession>